<sequence length="421" mass="46158">MDNRSPRSRGNMGPKPTPLKVRGDSHKIIKKPPLAPPHPQPQPPQTHQQEPSQSRPPPGPVNIYTVTPRIIHTHPNNFMTLVQRLTGQTSTSTTSSSSSSSTSEPKDTSTMVDTSHGLISPAARFAVTEKANISNELGTFVGGEGTMDQYYHHHHQEQPHQNRGFERPSFHHAGILSPGPYSLPSVSPDFFSTIGPTDPQEGTPYLIPSGDMHSYLSQDEDRGIPHSVKDTRSIGSAYDRYLQSMQTFFVPSEEAGPFNGVGMVRQGGSNMMPGPSMGELMAGCGGSLPSDFRPNGRDMGFGQLDSVGRPGREPHPLPPDVSNTLYVEGLPSNCSRREVSHIFRPFVGYREVRLVTQDSKHRSGDPTVLCFVDFENSACAATALSALQDYRMDEDEPDSKILRLQFFRNPGPRPGQRGGRR</sequence>
<accession>F4HWF9</accession>
<accession>F4HWF8</accession>
<accession>Q9LMP3</accession>
<feature type="chain" id="PRO_0000434147" description="Nuclear speckle RNA-binding protein B">
    <location>
        <begin position="1"/>
        <end position="421"/>
    </location>
</feature>
<feature type="domain" description="RRM" evidence="1">
    <location>
        <begin position="323"/>
        <end position="409"/>
    </location>
</feature>
<feature type="region of interest" description="Disordered" evidence="2">
    <location>
        <begin position="1"/>
        <end position="64"/>
    </location>
</feature>
<feature type="region of interest" description="Disordered" evidence="2">
    <location>
        <begin position="86"/>
        <end position="114"/>
    </location>
</feature>
<feature type="region of interest" description="Disordered" evidence="2">
    <location>
        <begin position="197"/>
        <end position="226"/>
    </location>
</feature>
<feature type="compositionally biased region" description="Pro residues" evidence="2">
    <location>
        <begin position="33"/>
        <end position="44"/>
    </location>
</feature>
<feature type="compositionally biased region" description="Low complexity" evidence="2">
    <location>
        <begin position="89"/>
        <end position="103"/>
    </location>
</feature>
<feature type="splice variant" id="VSP_057908" description="In isoform 2.">
    <original>MDNRSPRSRGNMGPKPTPLKVRGDSHKIIKKPPLAPPHPQPQPPQTHQQEPSQSRPPPGPVNIYTVTPRIIHTHPNNFMTLVQRLTGQTSTSTTSSSSSSSTSEPKDTSTMVDTSHGLISPAARFAVTEKANISNELGTFVGGEGTMDQYYHHHHQEQPHQNRGFERPSFHHAGILSPGPYSLPSVSPDFFSTIGPTDPQE</original>
    <variation>MADEYWNQQRQYQLPISSNPHVLPPKRPRSDFQ</variation>
    <location>
        <begin position="1"/>
        <end position="201"/>
    </location>
</feature>
<reference key="1">
    <citation type="journal article" date="2000" name="Nature">
        <title>Sequence and analysis of chromosome 1 of the plant Arabidopsis thaliana.</title>
        <authorList>
            <person name="Theologis A."/>
            <person name="Ecker J.R."/>
            <person name="Palm C.J."/>
            <person name="Federspiel N.A."/>
            <person name="Kaul S."/>
            <person name="White O."/>
            <person name="Alonso J."/>
            <person name="Altafi H."/>
            <person name="Araujo R."/>
            <person name="Bowman C.L."/>
            <person name="Brooks S.Y."/>
            <person name="Buehler E."/>
            <person name="Chan A."/>
            <person name="Chao Q."/>
            <person name="Chen H."/>
            <person name="Cheuk R.F."/>
            <person name="Chin C.W."/>
            <person name="Chung M.K."/>
            <person name="Conn L."/>
            <person name="Conway A.B."/>
            <person name="Conway A.R."/>
            <person name="Creasy T.H."/>
            <person name="Dewar K."/>
            <person name="Dunn P."/>
            <person name="Etgu P."/>
            <person name="Feldblyum T.V."/>
            <person name="Feng J.-D."/>
            <person name="Fong B."/>
            <person name="Fujii C.Y."/>
            <person name="Gill J.E."/>
            <person name="Goldsmith A.D."/>
            <person name="Haas B."/>
            <person name="Hansen N.F."/>
            <person name="Hughes B."/>
            <person name="Huizar L."/>
            <person name="Hunter J.L."/>
            <person name="Jenkins J."/>
            <person name="Johnson-Hopson C."/>
            <person name="Khan S."/>
            <person name="Khaykin E."/>
            <person name="Kim C.J."/>
            <person name="Koo H.L."/>
            <person name="Kremenetskaia I."/>
            <person name="Kurtz D.B."/>
            <person name="Kwan A."/>
            <person name="Lam B."/>
            <person name="Langin-Hooper S."/>
            <person name="Lee A."/>
            <person name="Lee J.M."/>
            <person name="Lenz C.A."/>
            <person name="Li J.H."/>
            <person name="Li Y.-P."/>
            <person name="Lin X."/>
            <person name="Liu S.X."/>
            <person name="Liu Z.A."/>
            <person name="Luros J.S."/>
            <person name="Maiti R."/>
            <person name="Marziali A."/>
            <person name="Militscher J."/>
            <person name="Miranda M."/>
            <person name="Nguyen M."/>
            <person name="Nierman W.C."/>
            <person name="Osborne B.I."/>
            <person name="Pai G."/>
            <person name="Peterson J."/>
            <person name="Pham P.K."/>
            <person name="Rizzo M."/>
            <person name="Rooney T."/>
            <person name="Rowley D."/>
            <person name="Sakano H."/>
            <person name="Salzberg S.L."/>
            <person name="Schwartz J.R."/>
            <person name="Shinn P."/>
            <person name="Southwick A.M."/>
            <person name="Sun H."/>
            <person name="Tallon L.J."/>
            <person name="Tambunga G."/>
            <person name="Toriumi M.J."/>
            <person name="Town C.D."/>
            <person name="Utterback T."/>
            <person name="Van Aken S."/>
            <person name="Vaysberg M."/>
            <person name="Vysotskaia V.S."/>
            <person name="Walker M."/>
            <person name="Wu D."/>
            <person name="Yu G."/>
            <person name="Fraser C.M."/>
            <person name="Venter J.C."/>
            <person name="Davis R.W."/>
        </authorList>
    </citation>
    <scope>NUCLEOTIDE SEQUENCE [LARGE SCALE GENOMIC DNA]</scope>
    <source>
        <strain>cv. Columbia</strain>
    </source>
</reference>
<reference key="2">
    <citation type="journal article" date="2017" name="Plant J.">
        <title>Araport11: a complete reannotation of the Arabidopsis thaliana reference genome.</title>
        <authorList>
            <person name="Cheng C.Y."/>
            <person name="Krishnakumar V."/>
            <person name="Chan A.P."/>
            <person name="Thibaud-Nissen F."/>
            <person name="Schobel S."/>
            <person name="Town C.D."/>
        </authorList>
    </citation>
    <scope>GENOME REANNOTATION</scope>
    <source>
        <strain>cv. Columbia</strain>
    </source>
</reference>
<reference key="3">
    <citation type="journal article" date="2014" name="Dev. Cell">
        <title>Long noncoding RNA modulates alternative splicing regulators in Arabidopsis.</title>
        <authorList>
            <person name="Bardou F."/>
            <person name="Ariel F."/>
            <person name="Simpson C.G."/>
            <person name="Romero-Barrios N."/>
            <person name="Laporte P."/>
            <person name="Balzergue S."/>
            <person name="Brown J.W."/>
            <person name="Crespi M."/>
        </authorList>
    </citation>
    <scope>FUNCTION</scope>
    <scope>ALTERNATIVE SPLICING</scope>
    <scope>SUBCELLULAR LOCATION</scope>
    <scope>TISSUE SPECIFICITY</scope>
    <scope>INDUCTION BY AUXIN</scope>
    <scope>DISRUPTION PHENOTYPE</scope>
</reference>
<evidence type="ECO:0000255" key="1">
    <source>
        <dbReference type="PROSITE-ProRule" id="PRU00176"/>
    </source>
</evidence>
<evidence type="ECO:0000256" key="2">
    <source>
        <dbReference type="SAM" id="MobiDB-lite"/>
    </source>
</evidence>
<evidence type="ECO:0000269" key="3">
    <source>
    </source>
</evidence>
<evidence type="ECO:0000303" key="4">
    <source>
    </source>
</evidence>
<evidence type="ECO:0000305" key="5"/>
<evidence type="ECO:0000312" key="6">
    <source>
        <dbReference type="Araport" id="AT1G21320"/>
    </source>
</evidence>
<evidence type="ECO:0000312" key="7">
    <source>
        <dbReference type="EMBL" id="AAF81354.1"/>
    </source>
</evidence>
<evidence type="ECO:0000312" key="8">
    <source>
        <dbReference type="Proteomes" id="UP000006548"/>
    </source>
</evidence>
<name>NSRB_ARATH</name>
<gene>
    <name evidence="4" type="primary">NSRB</name>
    <name evidence="6" type="ordered locus">At1g21320</name>
    <name evidence="7" type="ORF">F16F4.3</name>
</gene>
<keyword id="KW-0877">Alternative promoter usage</keyword>
<keyword id="KW-0539">Nucleus</keyword>
<keyword id="KW-1185">Reference proteome</keyword>
<keyword id="KW-0694">RNA-binding</keyword>
<organism evidence="8">
    <name type="scientific">Arabidopsis thaliana</name>
    <name type="common">Mouse-ear cress</name>
    <dbReference type="NCBI Taxonomy" id="3702"/>
    <lineage>
        <taxon>Eukaryota</taxon>
        <taxon>Viridiplantae</taxon>
        <taxon>Streptophyta</taxon>
        <taxon>Embryophyta</taxon>
        <taxon>Tracheophyta</taxon>
        <taxon>Spermatophyta</taxon>
        <taxon>Magnoliopsida</taxon>
        <taxon>eudicotyledons</taxon>
        <taxon>Gunneridae</taxon>
        <taxon>Pentapetalae</taxon>
        <taxon>rosids</taxon>
        <taxon>malvids</taxon>
        <taxon>Brassicales</taxon>
        <taxon>Brassicaceae</taxon>
        <taxon>Camelineae</taxon>
        <taxon>Arabidopsis</taxon>
    </lineage>
</organism>
<comment type="function">
    <text evidence="3">Alternative splicing (AS) regulator that binds to specific mRNAs and modulates auxin effects on the transcriptome. Displaced from its targets upon binding to AS competitor long non-coding RNA (ASCO-RNA).</text>
</comment>
<comment type="subcellular location">
    <subcellularLocation>
        <location evidence="3">Nucleus speckle</location>
    </subcellularLocation>
    <text evidence="3">Relocalizes to cytoplasmic bodies in trichoblast cells containing root hairs or when coexpressed with Medicago ENOD40 RNA.</text>
</comment>
<comment type="alternative products">
    <event type="alternative promoter"/>
    <isoform>
        <id>F4HWF9-1</id>
        <name>1</name>
        <sequence type="displayed"/>
    </isoform>
    <isoform>
        <id>F4HWF9-2</id>
        <name>2</name>
        <sequence type="described" ref="VSP_057908"/>
    </isoform>
</comment>
<comment type="tissue specificity">
    <text evidence="3">Isoform 1: Expressed in root meristems, lateral root primordia, root vascular tissues and cotyledon vascular tissues. Isoform 2: Expressed in root meristems, lateral root primordia and root vascular tissues.</text>
</comment>
<comment type="induction">
    <text evidence="3">Up-regulated by auxin treatment.</text>
</comment>
<comment type="disruption phenotype">
    <text evidence="3">No visible phenotype. Nsra and nsrb double mutants are less sensitive to auxin.</text>
</comment>
<comment type="sequence caution" evidence="5">
    <conflict type="erroneous gene model prediction">
        <sequence resource="EMBL-CDS" id="AAF81354"/>
    </conflict>
</comment>
<dbReference type="EMBL" id="AC036104">
    <property type="protein sequence ID" value="AAF81354.1"/>
    <property type="status" value="ALT_SEQ"/>
    <property type="molecule type" value="Genomic_DNA"/>
</dbReference>
<dbReference type="EMBL" id="CP002684">
    <property type="protein sequence ID" value="AEE30084.1"/>
    <property type="molecule type" value="Genomic_DNA"/>
</dbReference>
<dbReference type="EMBL" id="CP002684">
    <property type="protein sequence ID" value="AEE30085.1"/>
    <property type="molecule type" value="Genomic_DNA"/>
</dbReference>
<dbReference type="PIR" id="C86346">
    <property type="entry name" value="C86346"/>
</dbReference>
<dbReference type="RefSeq" id="NP_001154354.1">
    <molecule id="F4HWF9-2"/>
    <property type="nucleotide sequence ID" value="NM_001160882.2"/>
</dbReference>
<dbReference type="RefSeq" id="NP_173554.3">
    <molecule id="F4HWF9-1"/>
    <property type="nucleotide sequence ID" value="NM_101984.4"/>
</dbReference>
<dbReference type="SMR" id="F4HWF9"/>
<dbReference type="FunCoup" id="F4HWF9">
    <property type="interactions" value="1"/>
</dbReference>
<dbReference type="STRING" id="3702.F4HWF9"/>
<dbReference type="GlyGen" id="F4HWF9">
    <property type="glycosylation" value="2 sites"/>
</dbReference>
<dbReference type="iPTMnet" id="F4HWF9"/>
<dbReference type="PaxDb" id="3702-AT1G21320.1"/>
<dbReference type="EnsemblPlants" id="AT1G21320.1">
    <molecule id="F4HWF9-1"/>
    <property type="protein sequence ID" value="AT1G21320.1"/>
    <property type="gene ID" value="AT1G21320"/>
</dbReference>
<dbReference type="EnsemblPlants" id="AT1G21320.2">
    <molecule id="F4HWF9-2"/>
    <property type="protein sequence ID" value="AT1G21320.2"/>
    <property type="gene ID" value="AT1G21320"/>
</dbReference>
<dbReference type="GeneID" id="838729"/>
<dbReference type="Gramene" id="AT1G21320.1">
    <molecule id="F4HWF9-1"/>
    <property type="protein sequence ID" value="AT1G21320.1"/>
    <property type="gene ID" value="AT1G21320"/>
</dbReference>
<dbReference type="Gramene" id="AT1G21320.2">
    <molecule id="F4HWF9-2"/>
    <property type="protein sequence ID" value="AT1G21320.2"/>
    <property type="gene ID" value="AT1G21320"/>
</dbReference>
<dbReference type="KEGG" id="ath:AT1G21320"/>
<dbReference type="Araport" id="AT1G21320"/>
<dbReference type="TAIR" id="AT1G21320">
    <property type="gene designation" value="NSRB"/>
</dbReference>
<dbReference type="HOGENOM" id="CLU_652744_0_0_1"/>
<dbReference type="InParanoid" id="F4HWF9"/>
<dbReference type="OMA" id="RFHGAGM"/>
<dbReference type="PRO" id="PR:F4HWF9"/>
<dbReference type="Proteomes" id="UP000006548">
    <property type="component" value="Chromosome 1"/>
</dbReference>
<dbReference type="ExpressionAtlas" id="F4HWF9">
    <property type="expression patterns" value="baseline and differential"/>
</dbReference>
<dbReference type="GO" id="GO:0016607">
    <property type="term" value="C:nuclear speck"/>
    <property type="evidence" value="ECO:0007669"/>
    <property type="project" value="UniProtKB-SubCell"/>
</dbReference>
<dbReference type="GO" id="GO:0003723">
    <property type="term" value="F:RNA binding"/>
    <property type="evidence" value="ECO:0007669"/>
    <property type="project" value="UniProtKB-KW"/>
</dbReference>
<dbReference type="CDD" id="cd21618">
    <property type="entry name" value="RRM_AtNSRA_like"/>
    <property type="match status" value="1"/>
</dbReference>
<dbReference type="Gene3D" id="3.30.70.330">
    <property type="match status" value="1"/>
</dbReference>
<dbReference type="InterPro" id="IPR012677">
    <property type="entry name" value="Nucleotide-bd_a/b_plait_sf"/>
</dbReference>
<dbReference type="InterPro" id="IPR035979">
    <property type="entry name" value="RBD_domain_sf"/>
</dbReference>
<dbReference type="InterPro" id="IPR000504">
    <property type="entry name" value="RRM_dom"/>
</dbReference>
<dbReference type="InterPro" id="IPR008889">
    <property type="entry name" value="VQ"/>
</dbReference>
<dbReference type="PANTHER" id="PTHR10501">
    <property type="entry name" value="U1 SMALL NUCLEAR RIBONUCLEOPROTEIN A/U2 SMALL NUCLEAR RIBONUCLEOPROTEIN B"/>
    <property type="match status" value="1"/>
</dbReference>
<dbReference type="Pfam" id="PF00076">
    <property type="entry name" value="RRM_1"/>
    <property type="match status" value="1"/>
</dbReference>
<dbReference type="Pfam" id="PF05678">
    <property type="entry name" value="VQ"/>
    <property type="match status" value="1"/>
</dbReference>
<dbReference type="SMART" id="SM00360">
    <property type="entry name" value="RRM"/>
    <property type="match status" value="1"/>
</dbReference>
<dbReference type="SUPFAM" id="SSF54928">
    <property type="entry name" value="RNA-binding domain, RBD"/>
    <property type="match status" value="1"/>
</dbReference>
<dbReference type="PROSITE" id="PS50102">
    <property type="entry name" value="RRM"/>
    <property type="match status" value="1"/>
</dbReference>
<proteinExistence type="evidence at transcript level"/>
<protein>
    <recommendedName>
        <fullName evidence="4">Nuclear speckle RNA-binding protein B</fullName>
        <shortName evidence="4">AtNSRB</shortName>
    </recommendedName>
</protein>